<comment type="function">
    <text evidence="1">Catalyzes the transfer of a dimethylallyl group onto the adenine at position 37 in tRNAs that read codons beginning with uridine, leading to the formation of N6-(dimethylallyl)adenosine (i(6)A).</text>
</comment>
<comment type="catalytic activity">
    <reaction evidence="1">
        <text>adenosine(37) in tRNA + dimethylallyl diphosphate = N(6)-dimethylallyladenosine(37) in tRNA + diphosphate</text>
        <dbReference type="Rhea" id="RHEA:26482"/>
        <dbReference type="Rhea" id="RHEA-COMP:10162"/>
        <dbReference type="Rhea" id="RHEA-COMP:10375"/>
        <dbReference type="ChEBI" id="CHEBI:33019"/>
        <dbReference type="ChEBI" id="CHEBI:57623"/>
        <dbReference type="ChEBI" id="CHEBI:74411"/>
        <dbReference type="ChEBI" id="CHEBI:74415"/>
        <dbReference type="EC" id="2.5.1.75"/>
    </reaction>
</comment>
<comment type="cofactor">
    <cofactor evidence="1">
        <name>Mg(2+)</name>
        <dbReference type="ChEBI" id="CHEBI:18420"/>
    </cofactor>
</comment>
<comment type="subunit">
    <text evidence="1">Monomer.</text>
</comment>
<comment type="similarity">
    <text evidence="1">Belongs to the IPP transferase family.</text>
</comment>
<feature type="chain" id="PRO_0000163936" description="tRNA dimethylallyltransferase">
    <location>
        <begin position="1"/>
        <end position="305"/>
    </location>
</feature>
<feature type="region of interest" description="Interaction with substrate tRNA" evidence="1">
    <location>
        <begin position="36"/>
        <end position="39"/>
    </location>
</feature>
<feature type="binding site" evidence="1">
    <location>
        <begin position="11"/>
        <end position="18"/>
    </location>
    <ligand>
        <name>ATP</name>
        <dbReference type="ChEBI" id="CHEBI:30616"/>
    </ligand>
</feature>
<feature type="binding site" evidence="1">
    <location>
        <begin position="13"/>
        <end position="18"/>
    </location>
    <ligand>
        <name>substrate</name>
    </ligand>
</feature>
<feature type="site" description="Interaction with substrate tRNA" evidence="1">
    <location>
        <position position="102"/>
    </location>
</feature>
<accession>Q8Y7I3</accession>
<reference key="1">
    <citation type="journal article" date="2001" name="Science">
        <title>Comparative genomics of Listeria species.</title>
        <authorList>
            <person name="Glaser P."/>
            <person name="Frangeul L."/>
            <person name="Buchrieser C."/>
            <person name="Rusniok C."/>
            <person name="Amend A."/>
            <person name="Baquero F."/>
            <person name="Berche P."/>
            <person name="Bloecker H."/>
            <person name="Brandt P."/>
            <person name="Chakraborty T."/>
            <person name="Charbit A."/>
            <person name="Chetouani F."/>
            <person name="Couve E."/>
            <person name="de Daruvar A."/>
            <person name="Dehoux P."/>
            <person name="Domann E."/>
            <person name="Dominguez-Bernal G."/>
            <person name="Duchaud E."/>
            <person name="Durant L."/>
            <person name="Dussurget O."/>
            <person name="Entian K.-D."/>
            <person name="Fsihi H."/>
            <person name="Garcia-del Portillo F."/>
            <person name="Garrido P."/>
            <person name="Gautier L."/>
            <person name="Goebel W."/>
            <person name="Gomez-Lopez N."/>
            <person name="Hain T."/>
            <person name="Hauf J."/>
            <person name="Jackson D."/>
            <person name="Jones L.-M."/>
            <person name="Kaerst U."/>
            <person name="Kreft J."/>
            <person name="Kuhn M."/>
            <person name="Kunst F."/>
            <person name="Kurapkat G."/>
            <person name="Madueno E."/>
            <person name="Maitournam A."/>
            <person name="Mata Vicente J."/>
            <person name="Ng E."/>
            <person name="Nedjari H."/>
            <person name="Nordsiek G."/>
            <person name="Novella S."/>
            <person name="de Pablos B."/>
            <person name="Perez-Diaz J.-C."/>
            <person name="Purcell R."/>
            <person name="Remmel B."/>
            <person name="Rose M."/>
            <person name="Schlueter T."/>
            <person name="Simoes N."/>
            <person name="Tierrez A."/>
            <person name="Vazquez-Boland J.-A."/>
            <person name="Voss H."/>
            <person name="Wehland J."/>
            <person name="Cossart P."/>
        </authorList>
    </citation>
    <scope>NUCLEOTIDE SEQUENCE [LARGE SCALE GENOMIC DNA]</scope>
    <source>
        <strain>ATCC BAA-679 / EGD-e</strain>
    </source>
</reference>
<evidence type="ECO:0000255" key="1">
    <source>
        <dbReference type="HAMAP-Rule" id="MF_00185"/>
    </source>
</evidence>
<sequence length="305" mass="34833">MSKIPVIVIVGPTAVGKTSLSIELAKKLDGEIISGDSMQVYRGLDIGTAKITPEEMDEIKHYLIDVTDPSEPFTAAKFQTETRKWIETIHQAGKLPIIVGGTGLYIQSVFYDYDFGNVSEDKAYRAELEQLNKTLLWQMLEQQDPESAAQIHENNKRRVIRALEVMHLTGKPFSEYQVHNVLNDTYKPLFLGLDLDRALLYERINQRVNLMFEEGLVTEAKKLYDQHLVDVPAVCGIGYKELFPYFEGKSSLEEAKELIQKNSRHFAKRQLTWFRNRMEIDWIQAGVSTTEAEALNKAETFLSVK</sequence>
<organism>
    <name type="scientific">Listeria monocytogenes serovar 1/2a (strain ATCC BAA-679 / EGD-e)</name>
    <dbReference type="NCBI Taxonomy" id="169963"/>
    <lineage>
        <taxon>Bacteria</taxon>
        <taxon>Bacillati</taxon>
        <taxon>Bacillota</taxon>
        <taxon>Bacilli</taxon>
        <taxon>Bacillales</taxon>
        <taxon>Listeriaceae</taxon>
        <taxon>Listeria</taxon>
    </lineage>
</organism>
<dbReference type="EC" id="2.5.1.75" evidence="1"/>
<dbReference type="EMBL" id="AL591978">
    <property type="protein sequence ID" value="CAC99372.1"/>
    <property type="molecule type" value="Genomic_DNA"/>
</dbReference>
<dbReference type="PIR" id="AF1236">
    <property type="entry name" value="AF1236"/>
</dbReference>
<dbReference type="RefSeq" id="NP_464819.1">
    <property type="nucleotide sequence ID" value="NC_003210.1"/>
</dbReference>
<dbReference type="RefSeq" id="WP_010989726.1">
    <property type="nucleotide sequence ID" value="NZ_CP149495.1"/>
</dbReference>
<dbReference type="SMR" id="Q8Y7I3"/>
<dbReference type="STRING" id="169963.gene:17593951"/>
<dbReference type="PaxDb" id="169963-lmo1294"/>
<dbReference type="EnsemblBacteria" id="CAC99372">
    <property type="protein sequence ID" value="CAC99372"/>
    <property type="gene ID" value="CAC99372"/>
</dbReference>
<dbReference type="GeneID" id="985128"/>
<dbReference type="KEGG" id="lmo:lmo1294"/>
<dbReference type="PATRIC" id="fig|169963.11.peg.1329"/>
<dbReference type="eggNOG" id="COG0324">
    <property type="taxonomic scope" value="Bacteria"/>
</dbReference>
<dbReference type="HOGENOM" id="CLU_032616_0_1_9"/>
<dbReference type="OrthoDB" id="9776390at2"/>
<dbReference type="PhylomeDB" id="Q8Y7I3"/>
<dbReference type="BioCyc" id="LMON169963:LMO1294-MONOMER"/>
<dbReference type="Proteomes" id="UP000000817">
    <property type="component" value="Chromosome"/>
</dbReference>
<dbReference type="GO" id="GO:0005524">
    <property type="term" value="F:ATP binding"/>
    <property type="evidence" value="ECO:0007669"/>
    <property type="project" value="UniProtKB-UniRule"/>
</dbReference>
<dbReference type="GO" id="GO:0052381">
    <property type="term" value="F:tRNA dimethylallyltransferase activity"/>
    <property type="evidence" value="ECO:0000318"/>
    <property type="project" value="GO_Central"/>
</dbReference>
<dbReference type="GO" id="GO:0006400">
    <property type="term" value="P:tRNA modification"/>
    <property type="evidence" value="ECO:0000318"/>
    <property type="project" value="GO_Central"/>
</dbReference>
<dbReference type="FunFam" id="1.10.20.140:FF:000001">
    <property type="entry name" value="tRNA dimethylallyltransferase"/>
    <property type="match status" value="1"/>
</dbReference>
<dbReference type="Gene3D" id="1.10.20.140">
    <property type="match status" value="1"/>
</dbReference>
<dbReference type="Gene3D" id="3.40.50.300">
    <property type="entry name" value="P-loop containing nucleotide triphosphate hydrolases"/>
    <property type="match status" value="1"/>
</dbReference>
<dbReference type="HAMAP" id="MF_00185">
    <property type="entry name" value="IPP_trans"/>
    <property type="match status" value="1"/>
</dbReference>
<dbReference type="InterPro" id="IPR039657">
    <property type="entry name" value="Dimethylallyltransferase"/>
</dbReference>
<dbReference type="InterPro" id="IPR018022">
    <property type="entry name" value="IPT"/>
</dbReference>
<dbReference type="InterPro" id="IPR027417">
    <property type="entry name" value="P-loop_NTPase"/>
</dbReference>
<dbReference type="NCBIfam" id="TIGR00174">
    <property type="entry name" value="miaA"/>
    <property type="match status" value="1"/>
</dbReference>
<dbReference type="PANTHER" id="PTHR11088">
    <property type="entry name" value="TRNA DIMETHYLALLYLTRANSFERASE"/>
    <property type="match status" value="1"/>
</dbReference>
<dbReference type="PANTHER" id="PTHR11088:SF60">
    <property type="entry name" value="TRNA DIMETHYLALLYLTRANSFERASE"/>
    <property type="match status" value="1"/>
</dbReference>
<dbReference type="Pfam" id="PF01715">
    <property type="entry name" value="IPPT"/>
    <property type="match status" value="1"/>
</dbReference>
<dbReference type="SUPFAM" id="SSF52540">
    <property type="entry name" value="P-loop containing nucleoside triphosphate hydrolases"/>
    <property type="match status" value="2"/>
</dbReference>
<proteinExistence type="inferred from homology"/>
<gene>
    <name evidence="1" type="primary">miaA</name>
    <name type="ordered locus">lmo1294</name>
</gene>
<name>MIAA_LISMO</name>
<keyword id="KW-0067">ATP-binding</keyword>
<keyword id="KW-0460">Magnesium</keyword>
<keyword id="KW-0547">Nucleotide-binding</keyword>
<keyword id="KW-1185">Reference proteome</keyword>
<keyword id="KW-0808">Transferase</keyword>
<keyword id="KW-0819">tRNA processing</keyword>
<protein>
    <recommendedName>
        <fullName evidence="1">tRNA dimethylallyltransferase</fullName>
        <ecNumber evidence="1">2.5.1.75</ecNumber>
    </recommendedName>
    <alternativeName>
        <fullName evidence="1">Dimethylallyl diphosphate:tRNA dimethylallyltransferase</fullName>
        <shortName evidence="1">DMAPP:tRNA dimethylallyltransferase</shortName>
        <shortName evidence="1">DMATase</shortName>
    </alternativeName>
    <alternativeName>
        <fullName evidence="1">Isopentenyl-diphosphate:tRNA isopentenyltransferase</fullName>
        <shortName evidence="1">IPP transferase</shortName>
        <shortName evidence="1">IPPT</shortName>
        <shortName evidence="1">IPTase</shortName>
    </alternativeName>
</protein>